<name>SECB_SHEAM</name>
<proteinExistence type="inferred from homology"/>
<dbReference type="EMBL" id="CP000507">
    <property type="protein sequence ID" value="ABL98274.1"/>
    <property type="molecule type" value="Genomic_DNA"/>
</dbReference>
<dbReference type="RefSeq" id="WP_011758185.1">
    <property type="nucleotide sequence ID" value="NC_008700.1"/>
</dbReference>
<dbReference type="SMR" id="A1S1L8"/>
<dbReference type="STRING" id="326297.Sama_0062"/>
<dbReference type="KEGG" id="saz:Sama_0062"/>
<dbReference type="eggNOG" id="COG1952">
    <property type="taxonomic scope" value="Bacteria"/>
</dbReference>
<dbReference type="HOGENOM" id="CLU_111574_1_0_6"/>
<dbReference type="OrthoDB" id="9795145at2"/>
<dbReference type="Proteomes" id="UP000009175">
    <property type="component" value="Chromosome"/>
</dbReference>
<dbReference type="GO" id="GO:0005737">
    <property type="term" value="C:cytoplasm"/>
    <property type="evidence" value="ECO:0007669"/>
    <property type="project" value="UniProtKB-SubCell"/>
</dbReference>
<dbReference type="GO" id="GO:0051082">
    <property type="term" value="F:unfolded protein binding"/>
    <property type="evidence" value="ECO:0007669"/>
    <property type="project" value="InterPro"/>
</dbReference>
<dbReference type="GO" id="GO:0006457">
    <property type="term" value="P:protein folding"/>
    <property type="evidence" value="ECO:0007669"/>
    <property type="project" value="UniProtKB-UniRule"/>
</dbReference>
<dbReference type="GO" id="GO:0051262">
    <property type="term" value="P:protein tetramerization"/>
    <property type="evidence" value="ECO:0007669"/>
    <property type="project" value="InterPro"/>
</dbReference>
<dbReference type="GO" id="GO:0015031">
    <property type="term" value="P:protein transport"/>
    <property type="evidence" value="ECO:0007669"/>
    <property type="project" value="UniProtKB-UniRule"/>
</dbReference>
<dbReference type="Gene3D" id="3.10.420.10">
    <property type="entry name" value="SecB-like"/>
    <property type="match status" value="1"/>
</dbReference>
<dbReference type="HAMAP" id="MF_00821">
    <property type="entry name" value="SecB"/>
    <property type="match status" value="1"/>
</dbReference>
<dbReference type="InterPro" id="IPR003708">
    <property type="entry name" value="SecB"/>
</dbReference>
<dbReference type="InterPro" id="IPR035958">
    <property type="entry name" value="SecB-like_sf"/>
</dbReference>
<dbReference type="NCBIfam" id="NF004393">
    <property type="entry name" value="PRK05751.1-4"/>
    <property type="match status" value="1"/>
</dbReference>
<dbReference type="NCBIfam" id="TIGR00809">
    <property type="entry name" value="secB"/>
    <property type="match status" value="1"/>
</dbReference>
<dbReference type="PANTHER" id="PTHR36918">
    <property type="match status" value="1"/>
</dbReference>
<dbReference type="PANTHER" id="PTHR36918:SF1">
    <property type="entry name" value="PROTEIN-EXPORT PROTEIN SECB"/>
    <property type="match status" value="1"/>
</dbReference>
<dbReference type="Pfam" id="PF02556">
    <property type="entry name" value="SecB"/>
    <property type="match status" value="1"/>
</dbReference>
<dbReference type="PRINTS" id="PR01594">
    <property type="entry name" value="SECBCHAPRONE"/>
</dbReference>
<dbReference type="SUPFAM" id="SSF54611">
    <property type="entry name" value="SecB-like"/>
    <property type="match status" value="1"/>
</dbReference>
<feature type="chain" id="PRO_1000062516" description="Protein-export protein SecB">
    <location>
        <begin position="1"/>
        <end position="159"/>
    </location>
</feature>
<reference key="1">
    <citation type="submission" date="2006-12" db="EMBL/GenBank/DDBJ databases">
        <title>Complete sequence of Shewanella amazonensis SB2B.</title>
        <authorList>
            <consortium name="US DOE Joint Genome Institute"/>
            <person name="Copeland A."/>
            <person name="Lucas S."/>
            <person name="Lapidus A."/>
            <person name="Barry K."/>
            <person name="Detter J.C."/>
            <person name="Glavina del Rio T."/>
            <person name="Hammon N."/>
            <person name="Israni S."/>
            <person name="Dalin E."/>
            <person name="Tice H."/>
            <person name="Pitluck S."/>
            <person name="Munk A.C."/>
            <person name="Brettin T."/>
            <person name="Bruce D."/>
            <person name="Han C."/>
            <person name="Tapia R."/>
            <person name="Gilna P."/>
            <person name="Schmutz J."/>
            <person name="Larimer F."/>
            <person name="Land M."/>
            <person name="Hauser L."/>
            <person name="Kyrpides N."/>
            <person name="Mikhailova N."/>
            <person name="Fredrickson J."/>
            <person name="Richardson P."/>
        </authorList>
    </citation>
    <scope>NUCLEOTIDE SEQUENCE [LARGE SCALE GENOMIC DNA]</scope>
    <source>
        <strain>ATCC BAA-1098 / SB2B</strain>
    </source>
</reference>
<keyword id="KW-0143">Chaperone</keyword>
<keyword id="KW-0963">Cytoplasm</keyword>
<keyword id="KW-0653">Protein transport</keyword>
<keyword id="KW-1185">Reference proteome</keyword>
<keyword id="KW-0811">Translocation</keyword>
<keyword id="KW-0813">Transport</keyword>
<organism>
    <name type="scientific">Shewanella amazonensis (strain ATCC BAA-1098 / SB2B)</name>
    <dbReference type="NCBI Taxonomy" id="326297"/>
    <lineage>
        <taxon>Bacteria</taxon>
        <taxon>Pseudomonadati</taxon>
        <taxon>Pseudomonadota</taxon>
        <taxon>Gammaproteobacteria</taxon>
        <taxon>Alteromonadales</taxon>
        <taxon>Shewanellaceae</taxon>
        <taxon>Shewanella</taxon>
    </lineage>
</organism>
<comment type="function">
    <text evidence="1">One of the proteins required for the normal export of preproteins out of the cell cytoplasm. It is a molecular chaperone that binds to a subset of precursor proteins, maintaining them in a translocation-competent state. It also specifically binds to its receptor SecA.</text>
</comment>
<comment type="subunit">
    <text evidence="1">Homotetramer, a dimer of dimers. One homotetramer interacts with 1 SecA dimer.</text>
</comment>
<comment type="subcellular location">
    <subcellularLocation>
        <location evidence="1">Cytoplasm</location>
    </subcellularLocation>
</comment>
<comment type="similarity">
    <text evidence="1">Belongs to the SecB family.</text>
</comment>
<sequence length="159" mass="17495">MAEVANNEQQAPQFNIQRIYTKDVSFETPNSPAVFQKEWNPEVKLDLDTRSTKLADDIFEVVLSVTVTAKNGDETAFLCEVQQAGIFHIGGLTEPQLAHSLGAYCPNILFPYARESVASMVSRGTFPQLNLAPVNFDALFAQYVQQRAAAAQPTEEANA</sequence>
<evidence type="ECO:0000255" key="1">
    <source>
        <dbReference type="HAMAP-Rule" id="MF_00821"/>
    </source>
</evidence>
<protein>
    <recommendedName>
        <fullName evidence="1">Protein-export protein SecB</fullName>
    </recommendedName>
</protein>
<accession>A1S1L8</accession>
<gene>
    <name evidence="1" type="primary">secB</name>
    <name type="ordered locus">Sama_0062</name>
</gene>